<proteinExistence type="inferred from homology"/>
<gene>
    <name evidence="1" type="primary">tsf</name>
    <name type="ordered locus">NMC2081</name>
</gene>
<reference key="1">
    <citation type="journal article" date="2007" name="PLoS Genet.">
        <title>Meningococcal genetic variation mechanisms viewed through comparative analysis of serogroup C strain FAM18.</title>
        <authorList>
            <person name="Bentley S.D."/>
            <person name="Vernikos G.S."/>
            <person name="Snyder L.A.S."/>
            <person name="Churcher C."/>
            <person name="Arrowsmith C."/>
            <person name="Chillingworth T."/>
            <person name="Cronin A."/>
            <person name="Davis P.H."/>
            <person name="Holroyd N.E."/>
            <person name="Jagels K."/>
            <person name="Maddison M."/>
            <person name="Moule S."/>
            <person name="Rabbinowitsch E."/>
            <person name="Sharp S."/>
            <person name="Unwin L."/>
            <person name="Whitehead S."/>
            <person name="Quail M.A."/>
            <person name="Achtman M."/>
            <person name="Barrell B.G."/>
            <person name="Saunders N.J."/>
            <person name="Parkhill J."/>
        </authorList>
    </citation>
    <scope>NUCLEOTIDE SEQUENCE [LARGE SCALE GENOMIC DNA]</scope>
    <source>
        <strain>ATCC 700532 / DSM 15464 / FAM18</strain>
    </source>
</reference>
<evidence type="ECO:0000255" key="1">
    <source>
        <dbReference type="HAMAP-Rule" id="MF_00050"/>
    </source>
</evidence>
<evidence type="ECO:0000305" key="2"/>
<organism>
    <name type="scientific">Neisseria meningitidis serogroup C / serotype 2a (strain ATCC 700532 / DSM 15464 / FAM18)</name>
    <dbReference type="NCBI Taxonomy" id="272831"/>
    <lineage>
        <taxon>Bacteria</taxon>
        <taxon>Pseudomonadati</taxon>
        <taxon>Pseudomonadota</taxon>
        <taxon>Betaproteobacteria</taxon>
        <taxon>Neisseriales</taxon>
        <taxon>Neisseriaceae</taxon>
        <taxon>Neisseria</taxon>
    </lineage>
</organism>
<dbReference type="EMBL" id="AM421808">
    <property type="protein sequence ID" value="CAM11234.1"/>
    <property type="status" value="ALT_INIT"/>
    <property type="molecule type" value="Genomic_DNA"/>
</dbReference>
<dbReference type="RefSeq" id="WP_002215087.1">
    <property type="nucleotide sequence ID" value="NC_008767.1"/>
</dbReference>
<dbReference type="SMR" id="A1KWH7"/>
<dbReference type="KEGG" id="nmc:NMC2081"/>
<dbReference type="HOGENOM" id="CLU_047155_0_2_4"/>
<dbReference type="Proteomes" id="UP000002286">
    <property type="component" value="Chromosome"/>
</dbReference>
<dbReference type="GO" id="GO:0005737">
    <property type="term" value="C:cytoplasm"/>
    <property type="evidence" value="ECO:0007669"/>
    <property type="project" value="UniProtKB-SubCell"/>
</dbReference>
<dbReference type="GO" id="GO:0003746">
    <property type="term" value="F:translation elongation factor activity"/>
    <property type="evidence" value="ECO:0007669"/>
    <property type="project" value="UniProtKB-UniRule"/>
</dbReference>
<dbReference type="CDD" id="cd14275">
    <property type="entry name" value="UBA_EF-Ts"/>
    <property type="match status" value="1"/>
</dbReference>
<dbReference type="FunFam" id="1.10.286.20:FF:000001">
    <property type="entry name" value="Elongation factor Ts"/>
    <property type="match status" value="1"/>
</dbReference>
<dbReference type="FunFam" id="1.10.8.10:FF:000001">
    <property type="entry name" value="Elongation factor Ts"/>
    <property type="match status" value="1"/>
</dbReference>
<dbReference type="FunFam" id="3.30.479.20:FF:000001">
    <property type="entry name" value="Elongation factor Ts"/>
    <property type="match status" value="1"/>
</dbReference>
<dbReference type="Gene3D" id="1.10.286.20">
    <property type="match status" value="1"/>
</dbReference>
<dbReference type="Gene3D" id="1.10.8.10">
    <property type="entry name" value="DNA helicase RuvA subunit, C-terminal domain"/>
    <property type="match status" value="1"/>
</dbReference>
<dbReference type="Gene3D" id="3.30.479.20">
    <property type="entry name" value="Elongation factor Ts, dimerisation domain"/>
    <property type="match status" value="2"/>
</dbReference>
<dbReference type="HAMAP" id="MF_00050">
    <property type="entry name" value="EF_Ts"/>
    <property type="match status" value="1"/>
</dbReference>
<dbReference type="InterPro" id="IPR036402">
    <property type="entry name" value="EF-Ts_dimer_sf"/>
</dbReference>
<dbReference type="InterPro" id="IPR001816">
    <property type="entry name" value="Transl_elong_EFTs/EF1B"/>
</dbReference>
<dbReference type="InterPro" id="IPR014039">
    <property type="entry name" value="Transl_elong_EFTs/EF1B_dimer"/>
</dbReference>
<dbReference type="InterPro" id="IPR018101">
    <property type="entry name" value="Transl_elong_Ts_CS"/>
</dbReference>
<dbReference type="InterPro" id="IPR009060">
    <property type="entry name" value="UBA-like_sf"/>
</dbReference>
<dbReference type="NCBIfam" id="TIGR00116">
    <property type="entry name" value="tsf"/>
    <property type="match status" value="1"/>
</dbReference>
<dbReference type="PANTHER" id="PTHR11741">
    <property type="entry name" value="ELONGATION FACTOR TS"/>
    <property type="match status" value="1"/>
</dbReference>
<dbReference type="PANTHER" id="PTHR11741:SF0">
    <property type="entry name" value="ELONGATION FACTOR TS, MITOCHONDRIAL"/>
    <property type="match status" value="1"/>
</dbReference>
<dbReference type="Pfam" id="PF00889">
    <property type="entry name" value="EF_TS"/>
    <property type="match status" value="1"/>
</dbReference>
<dbReference type="SUPFAM" id="SSF54713">
    <property type="entry name" value="Elongation factor Ts (EF-Ts), dimerisation domain"/>
    <property type="match status" value="2"/>
</dbReference>
<dbReference type="SUPFAM" id="SSF46934">
    <property type="entry name" value="UBA-like"/>
    <property type="match status" value="1"/>
</dbReference>
<dbReference type="PROSITE" id="PS01126">
    <property type="entry name" value="EF_TS_1"/>
    <property type="match status" value="1"/>
</dbReference>
<dbReference type="PROSITE" id="PS01127">
    <property type="entry name" value="EF_TS_2"/>
    <property type="match status" value="1"/>
</dbReference>
<sequence>MAEITAKMVADLRAATGLGMMECKKALVEAEGNFDKAEEILRIKSGAKAGKLAGRTAAEGVLAYAINGNVGALVEVNCETDFVAKDAGFVEFANFVAKTAAEKKPASVEELSELVEAERKAIIAKLGENMSVRRFQVIDTANQLVAYIHGALATEGVLVEYKGSEDVARKIGMHIVAAKPQCVSEAEVDAETVEKERHIYTEQAIASGKPADIAAKMVEGRIRKFLAEITLNGQAFVMNPDQTVAQFAKENGTEVVSFVRYKVGDGIEKAVVDYAAEVAAAAKV</sequence>
<keyword id="KW-0963">Cytoplasm</keyword>
<keyword id="KW-0251">Elongation factor</keyword>
<keyword id="KW-0648">Protein biosynthesis</keyword>
<accession>A1KWH7</accession>
<name>EFTS_NEIMF</name>
<feature type="chain" id="PRO_0000323458" description="Elongation factor Ts">
    <location>
        <begin position="1"/>
        <end position="284"/>
    </location>
</feature>
<feature type="region of interest" description="Involved in Mg(2+) ion dislocation from EF-Tu" evidence="1">
    <location>
        <begin position="80"/>
        <end position="83"/>
    </location>
</feature>
<protein>
    <recommendedName>
        <fullName evidence="1">Elongation factor Ts</fullName>
        <shortName evidence="1">EF-Ts</shortName>
    </recommendedName>
</protein>
<comment type="function">
    <text evidence="1">Associates with the EF-Tu.GDP complex and induces the exchange of GDP to GTP. It remains bound to the aminoacyl-tRNA.EF-Tu.GTP complex up to the GTP hydrolysis stage on the ribosome.</text>
</comment>
<comment type="subcellular location">
    <subcellularLocation>
        <location evidence="1">Cytoplasm</location>
    </subcellularLocation>
</comment>
<comment type="similarity">
    <text evidence="1">Belongs to the EF-Ts family.</text>
</comment>
<comment type="sequence caution" evidence="2">
    <conflict type="erroneous initiation">
        <sequence resource="EMBL-CDS" id="CAM11234"/>
    </conflict>
</comment>